<name>ODPB_STAAN</name>
<accession>P99063</accession>
<accession>Q9L6H5</accession>
<dbReference type="EC" id="1.2.4.1"/>
<dbReference type="EMBL" id="BA000018">
    <property type="protein sequence ID" value="BAB42190.1"/>
    <property type="molecule type" value="Genomic_DNA"/>
</dbReference>
<dbReference type="PIR" id="C89879">
    <property type="entry name" value="C89879"/>
</dbReference>
<dbReference type="RefSeq" id="WP_000068176.1">
    <property type="nucleotide sequence ID" value="NC_002745.2"/>
</dbReference>
<dbReference type="SMR" id="P99063"/>
<dbReference type="EnsemblBacteria" id="BAB42190">
    <property type="protein sequence ID" value="BAB42190"/>
    <property type="gene ID" value="BAB42190"/>
</dbReference>
<dbReference type="KEGG" id="sau:SA0944"/>
<dbReference type="HOGENOM" id="CLU_012907_1_0_9"/>
<dbReference type="GO" id="GO:0004739">
    <property type="term" value="F:pyruvate dehydrogenase (acetyl-transferring) activity"/>
    <property type="evidence" value="ECO:0007669"/>
    <property type="project" value="UniProtKB-EC"/>
</dbReference>
<dbReference type="CDD" id="cd07036">
    <property type="entry name" value="TPP_PYR_E1-PDHc-beta_like"/>
    <property type="match status" value="1"/>
</dbReference>
<dbReference type="FunFam" id="3.40.50.920:FF:000001">
    <property type="entry name" value="Pyruvate dehydrogenase E1 beta subunit"/>
    <property type="match status" value="1"/>
</dbReference>
<dbReference type="FunFam" id="3.40.50.970:FF:000001">
    <property type="entry name" value="Pyruvate dehydrogenase E1 beta subunit"/>
    <property type="match status" value="1"/>
</dbReference>
<dbReference type="Gene3D" id="3.40.50.920">
    <property type="match status" value="1"/>
</dbReference>
<dbReference type="Gene3D" id="3.40.50.970">
    <property type="match status" value="1"/>
</dbReference>
<dbReference type="InterPro" id="IPR029061">
    <property type="entry name" value="THDP-binding"/>
</dbReference>
<dbReference type="InterPro" id="IPR009014">
    <property type="entry name" value="Transketo_C/PFOR_II"/>
</dbReference>
<dbReference type="InterPro" id="IPR005475">
    <property type="entry name" value="Transketolase-like_Pyr-bd"/>
</dbReference>
<dbReference type="InterPro" id="IPR033248">
    <property type="entry name" value="Transketolase_C"/>
</dbReference>
<dbReference type="PANTHER" id="PTHR43257">
    <property type="entry name" value="PYRUVATE DEHYDROGENASE E1 COMPONENT BETA SUBUNIT"/>
    <property type="match status" value="1"/>
</dbReference>
<dbReference type="PANTHER" id="PTHR43257:SF2">
    <property type="entry name" value="PYRUVATE DEHYDROGENASE E1 COMPONENT SUBUNIT BETA"/>
    <property type="match status" value="1"/>
</dbReference>
<dbReference type="Pfam" id="PF02779">
    <property type="entry name" value="Transket_pyr"/>
    <property type="match status" value="1"/>
</dbReference>
<dbReference type="Pfam" id="PF02780">
    <property type="entry name" value="Transketolase_C"/>
    <property type="match status" value="1"/>
</dbReference>
<dbReference type="SMART" id="SM00861">
    <property type="entry name" value="Transket_pyr"/>
    <property type="match status" value="1"/>
</dbReference>
<dbReference type="SUPFAM" id="SSF52518">
    <property type="entry name" value="Thiamin diphosphate-binding fold (THDP-binding)"/>
    <property type="match status" value="1"/>
</dbReference>
<dbReference type="SUPFAM" id="SSF52922">
    <property type="entry name" value="TK C-terminal domain-like"/>
    <property type="match status" value="1"/>
</dbReference>
<organism>
    <name type="scientific">Staphylococcus aureus (strain N315)</name>
    <dbReference type="NCBI Taxonomy" id="158879"/>
    <lineage>
        <taxon>Bacteria</taxon>
        <taxon>Bacillati</taxon>
        <taxon>Bacillota</taxon>
        <taxon>Bacilli</taxon>
        <taxon>Bacillales</taxon>
        <taxon>Staphylococcaceae</taxon>
        <taxon>Staphylococcus</taxon>
    </lineage>
</organism>
<reference key="1">
    <citation type="journal article" date="2001" name="Lancet">
        <title>Whole genome sequencing of meticillin-resistant Staphylococcus aureus.</title>
        <authorList>
            <person name="Kuroda M."/>
            <person name="Ohta T."/>
            <person name="Uchiyama I."/>
            <person name="Baba T."/>
            <person name="Yuzawa H."/>
            <person name="Kobayashi I."/>
            <person name="Cui L."/>
            <person name="Oguchi A."/>
            <person name="Aoki K."/>
            <person name="Nagai Y."/>
            <person name="Lian J.-Q."/>
            <person name="Ito T."/>
            <person name="Kanamori M."/>
            <person name="Matsumaru H."/>
            <person name="Maruyama A."/>
            <person name="Murakami H."/>
            <person name="Hosoyama A."/>
            <person name="Mizutani-Ui Y."/>
            <person name="Takahashi N.K."/>
            <person name="Sawano T."/>
            <person name="Inoue R."/>
            <person name="Kaito C."/>
            <person name="Sekimizu K."/>
            <person name="Hirakawa H."/>
            <person name="Kuhara S."/>
            <person name="Goto S."/>
            <person name="Yabuzaki J."/>
            <person name="Kanehisa M."/>
            <person name="Yamashita A."/>
            <person name="Oshima K."/>
            <person name="Furuya K."/>
            <person name="Yoshino C."/>
            <person name="Shiba T."/>
            <person name="Hattori M."/>
            <person name="Ogasawara N."/>
            <person name="Hayashi H."/>
            <person name="Hiramatsu K."/>
        </authorList>
    </citation>
    <scope>NUCLEOTIDE SEQUENCE [LARGE SCALE GENOMIC DNA]</scope>
    <source>
        <strain>N315</strain>
    </source>
</reference>
<reference key="2">
    <citation type="journal article" date="2005" name="J. Microbiol. Methods">
        <title>Correlation of proteomic and transcriptomic profiles of Staphylococcus aureus during the post-exponential phase of growth.</title>
        <authorList>
            <person name="Scherl A."/>
            <person name="Francois P."/>
            <person name="Bento M."/>
            <person name="Deshusses J.M."/>
            <person name="Charbonnier Y."/>
            <person name="Converset V."/>
            <person name="Huyghe A."/>
            <person name="Walter N."/>
            <person name="Hoogland C."/>
            <person name="Appel R.D."/>
            <person name="Sanchez J.-C."/>
            <person name="Zimmermann-Ivol C.G."/>
            <person name="Corthals G.L."/>
            <person name="Hochstrasser D.F."/>
            <person name="Schrenzel J."/>
        </authorList>
    </citation>
    <scope>IDENTIFICATION BY MASS SPECTROMETRY</scope>
    <source>
        <strain>N315</strain>
    </source>
</reference>
<reference key="3">
    <citation type="submission" date="2007-10" db="UniProtKB">
        <title>Shotgun proteomic analysis of total and membrane protein extracts of S. aureus strain N315.</title>
        <authorList>
            <person name="Vaezzadeh A.R."/>
            <person name="Deshusses J."/>
            <person name="Lescuyer P."/>
            <person name="Hochstrasser D.F."/>
        </authorList>
    </citation>
    <scope>IDENTIFICATION BY MASS SPECTROMETRY [LARGE SCALE ANALYSIS]</scope>
    <source>
        <strain>N315</strain>
    </source>
</reference>
<proteinExistence type="evidence at protein level"/>
<protein>
    <recommendedName>
        <fullName>Pyruvate dehydrogenase E1 component subunit beta</fullName>
        <ecNumber>1.2.4.1</ecNumber>
    </recommendedName>
</protein>
<feature type="chain" id="PRO_0000162230" description="Pyruvate dehydrogenase E1 component subunit beta">
    <location>
        <begin position="1"/>
        <end position="325"/>
    </location>
</feature>
<feature type="binding site" evidence="1">
    <location>
        <position position="60"/>
    </location>
    <ligand>
        <name>thiamine diphosphate</name>
        <dbReference type="ChEBI" id="CHEBI:58937"/>
    </ligand>
</feature>
<sequence>MAQMTMVQAINDALKTELKNDQDVLIFGEDVGVNGGVFRVTEGLQKEFGEDRVFDTPLAESGIGGLAMGLAVEGFRPVMEVQFLGFVFEVFDAIAGQIARTRFRSGGTKTAPVTIRSPFGGGVHTPELHADNLEGILAQSPGLKVVIPSGPYDAKGLLISSIRSNDPVVYLEHMKLYRSFREEVPEEEYTIDIGKANVKKEGNDISIITYGAMVQESMKAAEELEKDGYSVEVIDLRTVQPIDVDTIVASVEKTGRAVVVQEAQRQAGVGAAVVAELSERAILSLEAPIGRVAAADTIYPFTQAENVWLPNKNDIIEKAKETLEF</sequence>
<evidence type="ECO:0000250" key="1"/>
<keyword id="KW-0560">Oxidoreductase</keyword>
<keyword id="KW-0670">Pyruvate</keyword>
<keyword id="KW-0786">Thiamine pyrophosphate</keyword>
<comment type="function">
    <text evidence="1">The pyruvate dehydrogenase complex catalyzes the overall conversion of pyruvate to acetyl-CoA and CO(2). It contains multiple copies of three enzymatic components: pyruvate dehydrogenase (E1), dihydrolipoamide acetyltransferase (E2) and lipoamide dehydrogenase (E3) (By similarity).</text>
</comment>
<comment type="catalytic activity">
    <reaction>
        <text>N(6)-[(R)-lipoyl]-L-lysyl-[protein] + pyruvate + H(+) = N(6)-[(R)-S(8)-acetyldihydrolipoyl]-L-lysyl-[protein] + CO2</text>
        <dbReference type="Rhea" id="RHEA:19189"/>
        <dbReference type="Rhea" id="RHEA-COMP:10474"/>
        <dbReference type="Rhea" id="RHEA-COMP:10478"/>
        <dbReference type="ChEBI" id="CHEBI:15361"/>
        <dbReference type="ChEBI" id="CHEBI:15378"/>
        <dbReference type="ChEBI" id="CHEBI:16526"/>
        <dbReference type="ChEBI" id="CHEBI:83099"/>
        <dbReference type="ChEBI" id="CHEBI:83111"/>
        <dbReference type="EC" id="1.2.4.1"/>
    </reaction>
</comment>
<comment type="cofactor">
    <cofactor evidence="1">
        <name>thiamine diphosphate</name>
        <dbReference type="ChEBI" id="CHEBI:58937"/>
    </cofactor>
</comment>
<comment type="subunit">
    <text>Heterodimer of an alpha and a beta chain.</text>
</comment>
<gene>
    <name type="primary">pdhB</name>
    <name type="ordered locus">SA0944</name>
</gene>